<gene>
    <name type="primary">Stc1</name>
    <name type="synonym">Stc</name>
</gene>
<evidence type="ECO:0000250" key="1"/>
<evidence type="ECO:0000255" key="2"/>
<evidence type="ECO:0000305" key="3"/>
<reference key="1">
    <citation type="journal article" date="1996" name="Mol. Cell. Endocrinol.">
        <title>Molecular cloning and characterization of mouse stanniocalcin cDNA.</title>
        <authorList>
            <person name="Chang A.C.-M."/>
            <person name="Dunham M.A."/>
            <person name="Jeffrey K.J."/>
            <person name="Reddel R.R."/>
        </authorList>
    </citation>
    <scope>NUCLEOTIDE SEQUENCE [MRNA]</scope>
    <source>
        <strain>BALB/cJ</strain>
    </source>
</reference>
<reference key="2">
    <citation type="journal article" date="2004" name="Genome Res.">
        <title>The status, quality, and expansion of the NIH full-length cDNA project: the Mammalian Gene Collection (MGC).</title>
        <authorList>
            <consortium name="The MGC Project Team"/>
        </authorList>
    </citation>
    <scope>NUCLEOTIDE SEQUENCE [LARGE SCALE MRNA]</scope>
</reference>
<name>STC1_MOUSE</name>
<dbReference type="EMBL" id="U47815">
    <property type="protein sequence ID" value="AAC00050.1"/>
    <property type="molecule type" value="Genomic_DNA"/>
</dbReference>
<dbReference type="EMBL" id="BC021425">
    <property type="protein sequence ID" value="AAH21425.1"/>
    <property type="molecule type" value="mRNA"/>
</dbReference>
<dbReference type="CCDS" id="CCDS27236.1"/>
<dbReference type="RefSeq" id="NP_033311.3">
    <property type="nucleotide sequence ID" value="NM_009285.3"/>
</dbReference>
<dbReference type="SMR" id="O55183"/>
<dbReference type="FunCoup" id="O55183">
    <property type="interactions" value="696"/>
</dbReference>
<dbReference type="STRING" id="10090.ENSMUSP00000014957"/>
<dbReference type="BindingDB" id="O55183"/>
<dbReference type="GlyCosmos" id="O55183">
    <property type="glycosylation" value="1 site, No reported glycans"/>
</dbReference>
<dbReference type="GlyGen" id="O55183">
    <property type="glycosylation" value="1 site"/>
</dbReference>
<dbReference type="iPTMnet" id="O55183"/>
<dbReference type="PhosphoSitePlus" id="O55183"/>
<dbReference type="PaxDb" id="10090-ENSMUSP00000014957"/>
<dbReference type="ProteomicsDB" id="257487"/>
<dbReference type="Antibodypedia" id="9801">
    <property type="antibodies" value="403 antibodies from 37 providers"/>
</dbReference>
<dbReference type="DNASU" id="20855"/>
<dbReference type="Ensembl" id="ENSMUST00000014957.10">
    <property type="protein sequence ID" value="ENSMUSP00000014957.9"/>
    <property type="gene ID" value="ENSMUSG00000014813.10"/>
</dbReference>
<dbReference type="GeneID" id="20855"/>
<dbReference type="KEGG" id="mmu:20855"/>
<dbReference type="UCSC" id="uc007ulz.1">
    <property type="organism name" value="mouse"/>
</dbReference>
<dbReference type="AGR" id="MGI:109131"/>
<dbReference type="CTD" id="6781"/>
<dbReference type="MGI" id="MGI:109131">
    <property type="gene designation" value="Stc1"/>
</dbReference>
<dbReference type="VEuPathDB" id="HostDB:ENSMUSG00000014813"/>
<dbReference type="eggNOG" id="ENOG502QU7E">
    <property type="taxonomic scope" value="Eukaryota"/>
</dbReference>
<dbReference type="GeneTree" id="ENSGT00390000005989"/>
<dbReference type="HOGENOM" id="CLU_064102_1_1_1"/>
<dbReference type="InParanoid" id="O55183"/>
<dbReference type="OMA" id="MCSIAKR"/>
<dbReference type="OrthoDB" id="10025265at2759"/>
<dbReference type="PhylomeDB" id="O55183"/>
<dbReference type="TreeFam" id="TF324693"/>
<dbReference type="BioGRID-ORCS" id="20855">
    <property type="hits" value="1 hit in 78 CRISPR screens"/>
</dbReference>
<dbReference type="ChiTaRS" id="Stc1">
    <property type="organism name" value="mouse"/>
</dbReference>
<dbReference type="PRO" id="PR:O55183"/>
<dbReference type="Proteomes" id="UP000000589">
    <property type="component" value="Chromosome 14"/>
</dbReference>
<dbReference type="RNAct" id="O55183">
    <property type="molecule type" value="protein"/>
</dbReference>
<dbReference type="Bgee" id="ENSMUSG00000014813">
    <property type="expression patterns" value="Expressed in dorsal horn of spinal cord and 208 other cell types or tissues"/>
</dbReference>
<dbReference type="ExpressionAtlas" id="O55183">
    <property type="expression patterns" value="baseline and differential"/>
</dbReference>
<dbReference type="GO" id="GO:0016324">
    <property type="term" value="C:apical plasma membrane"/>
    <property type="evidence" value="ECO:0007669"/>
    <property type="project" value="Ensembl"/>
</dbReference>
<dbReference type="GO" id="GO:0005737">
    <property type="term" value="C:cytoplasm"/>
    <property type="evidence" value="ECO:0007669"/>
    <property type="project" value="Ensembl"/>
</dbReference>
<dbReference type="GO" id="GO:0005615">
    <property type="term" value="C:extracellular space"/>
    <property type="evidence" value="ECO:0000314"/>
    <property type="project" value="MGI"/>
</dbReference>
<dbReference type="GO" id="GO:0005634">
    <property type="term" value="C:nucleus"/>
    <property type="evidence" value="ECO:0007669"/>
    <property type="project" value="Ensembl"/>
</dbReference>
<dbReference type="GO" id="GO:0005179">
    <property type="term" value="F:hormone activity"/>
    <property type="evidence" value="ECO:0000304"/>
    <property type="project" value="MGI"/>
</dbReference>
<dbReference type="GO" id="GO:0042802">
    <property type="term" value="F:identical protein binding"/>
    <property type="evidence" value="ECO:0007669"/>
    <property type="project" value="Ensembl"/>
</dbReference>
<dbReference type="GO" id="GO:0071320">
    <property type="term" value="P:cellular response to cAMP"/>
    <property type="evidence" value="ECO:0007669"/>
    <property type="project" value="Ensembl"/>
</dbReference>
<dbReference type="GO" id="GO:0071385">
    <property type="term" value="P:cellular response to glucocorticoid stimulus"/>
    <property type="evidence" value="ECO:0007669"/>
    <property type="project" value="Ensembl"/>
</dbReference>
<dbReference type="GO" id="GO:0071456">
    <property type="term" value="P:cellular response to hypoxia"/>
    <property type="evidence" value="ECO:0007669"/>
    <property type="project" value="Ensembl"/>
</dbReference>
<dbReference type="GO" id="GO:0035988">
    <property type="term" value="P:chondrocyte proliferation"/>
    <property type="evidence" value="ECO:0007669"/>
    <property type="project" value="Ensembl"/>
</dbReference>
<dbReference type="GO" id="GO:0046697">
    <property type="term" value="P:decidualization"/>
    <property type="evidence" value="ECO:0007669"/>
    <property type="project" value="Ensembl"/>
</dbReference>
<dbReference type="GO" id="GO:0007566">
    <property type="term" value="P:embryo implantation"/>
    <property type="evidence" value="ECO:0007669"/>
    <property type="project" value="Ensembl"/>
</dbReference>
<dbReference type="GO" id="GO:0001886">
    <property type="term" value="P:endothelial cell morphogenesis"/>
    <property type="evidence" value="ECO:0007669"/>
    <property type="project" value="Ensembl"/>
</dbReference>
<dbReference type="GO" id="GO:0003421">
    <property type="term" value="P:growth plate cartilage axis specification"/>
    <property type="evidence" value="ECO:0007669"/>
    <property type="project" value="Ensembl"/>
</dbReference>
<dbReference type="GO" id="GO:0006874">
    <property type="term" value="P:intracellular calcium ion homeostasis"/>
    <property type="evidence" value="ECO:0000304"/>
    <property type="project" value="MGI"/>
</dbReference>
<dbReference type="GO" id="GO:0030002">
    <property type="term" value="P:intracellular monoatomic anion homeostasis"/>
    <property type="evidence" value="ECO:0000304"/>
    <property type="project" value="MGI"/>
</dbReference>
<dbReference type="GO" id="GO:0051926">
    <property type="term" value="P:negative regulation of calcium ion transport"/>
    <property type="evidence" value="ECO:0007669"/>
    <property type="project" value="Ensembl"/>
</dbReference>
<dbReference type="GO" id="GO:0010596">
    <property type="term" value="P:negative regulation of endothelial cell migration"/>
    <property type="evidence" value="ECO:0007669"/>
    <property type="project" value="Ensembl"/>
</dbReference>
<dbReference type="GO" id="GO:1903403">
    <property type="term" value="P:negative regulation of renal phosphate excretion"/>
    <property type="evidence" value="ECO:0007669"/>
    <property type="project" value="Ensembl"/>
</dbReference>
<dbReference type="GO" id="GO:0001503">
    <property type="term" value="P:ossification"/>
    <property type="evidence" value="ECO:0007669"/>
    <property type="project" value="Ensembl"/>
</dbReference>
<dbReference type="GO" id="GO:0090280">
    <property type="term" value="P:positive regulation of calcium ion import"/>
    <property type="evidence" value="ECO:0007669"/>
    <property type="project" value="Ensembl"/>
</dbReference>
<dbReference type="GO" id="GO:0086004">
    <property type="term" value="P:regulation of cardiac muscle cell contraction"/>
    <property type="evidence" value="ECO:0007669"/>
    <property type="project" value="Ensembl"/>
</dbReference>
<dbReference type="GO" id="GO:0044070">
    <property type="term" value="P:regulation of monoatomic anion transport"/>
    <property type="evidence" value="ECO:0007669"/>
    <property type="project" value="Ensembl"/>
</dbReference>
<dbReference type="GO" id="GO:0033280">
    <property type="term" value="P:response to vitamin D"/>
    <property type="evidence" value="ECO:0007669"/>
    <property type="project" value="Ensembl"/>
</dbReference>
<dbReference type="InterPro" id="IPR004978">
    <property type="entry name" value="Stanniocalcin"/>
</dbReference>
<dbReference type="PANTHER" id="PTHR11245">
    <property type="entry name" value="STANNIOCALCIN"/>
    <property type="match status" value="1"/>
</dbReference>
<dbReference type="PANTHER" id="PTHR11245:SF1">
    <property type="entry name" value="STANNIOCALCIN-1"/>
    <property type="match status" value="1"/>
</dbReference>
<dbReference type="Pfam" id="PF03298">
    <property type="entry name" value="Stanniocalcin"/>
    <property type="match status" value="1"/>
</dbReference>
<sequence>MLQNSAVILALVISAAAAHEAEQNDSVSPRKSRVAAQNSAEVVRCLNSALQVGCGAFACLENSTCDTDGMYDICKSFLYSAAKFDTQGKAFVKESLKCIANGITSKVFLAIRRCSTFQRMIAEVQEDCYSKLNVCSIAKRNPEAITEVIQLPNHFSNRYYNRLVRSLLECDEDTVSTIRDSLMEKIGPNMASLFHILQTDHCAQTHPRADFNRRRTNEPQKLKVLLRNLRGEGDSPSHIKRTSQESA</sequence>
<organism>
    <name type="scientific">Mus musculus</name>
    <name type="common">Mouse</name>
    <dbReference type="NCBI Taxonomy" id="10090"/>
    <lineage>
        <taxon>Eukaryota</taxon>
        <taxon>Metazoa</taxon>
        <taxon>Chordata</taxon>
        <taxon>Craniata</taxon>
        <taxon>Vertebrata</taxon>
        <taxon>Euteleostomi</taxon>
        <taxon>Mammalia</taxon>
        <taxon>Eutheria</taxon>
        <taxon>Euarchontoglires</taxon>
        <taxon>Glires</taxon>
        <taxon>Rodentia</taxon>
        <taxon>Myomorpha</taxon>
        <taxon>Muroidea</taxon>
        <taxon>Muridae</taxon>
        <taxon>Murinae</taxon>
        <taxon>Mus</taxon>
        <taxon>Mus</taxon>
    </lineage>
</organism>
<comment type="function">
    <text evidence="1">Stimulates renal phosphate reabsorption, and could therefore prevent hypercalcemia.</text>
</comment>
<comment type="subunit">
    <text evidence="1">Homodimer; disulfide-linked.</text>
</comment>
<comment type="subcellular location">
    <subcellularLocation>
        <location>Secreted</location>
    </subcellularLocation>
</comment>
<comment type="tissue specificity">
    <text>Expressed in many tissues.</text>
</comment>
<comment type="similarity">
    <text evidence="3">Belongs to the stanniocalcin family.</text>
</comment>
<keyword id="KW-1015">Disulfide bond</keyword>
<keyword id="KW-0325">Glycoprotein</keyword>
<keyword id="KW-0372">Hormone</keyword>
<keyword id="KW-1185">Reference proteome</keyword>
<keyword id="KW-0964">Secreted</keyword>
<keyword id="KW-0732">Signal</keyword>
<proteinExistence type="evidence at transcript level"/>
<feature type="signal peptide" evidence="2">
    <location>
        <begin position="1"/>
        <end position="18"/>
    </location>
</feature>
<feature type="propeptide" id="PRO_0000033299" evidence="2">
    <location>
        <begin position="19"/>
        <end position="33"/>
    </location>
</feature>
<feature type="chain" id="PRO_0000033300" description="Stanniocalcin-1">
    <location>
        <begin position="34"/>
        <end position="247"/>
    </location>
</feature>
<feature type="glycosylation site" description="N-linked (GlcNAc...) asparagine" evidence="2">
    <location>
        <position position="62"/>
    </location>
</feature>
<feature type="disulfide bond" evidence="1">
    <location>
        <begin position="45"/>
        <end position="59"/>
    </location>
</feature>
<feature type="disulfide bond" evidence="1">
    <location>
        <begin position="54"/>
        <end position="74"/>
    </location>
</feature>
<feature type="disulfide bond" evidence="1">
    <location>
        <begin position="65"/>
        <end position="114"/>
    </location>
</feature>
<feature type="disulfide bond" evidence="1">
    <location>
        <begin position="98"/>
        <end position="128"/>
    </location>
</feature>
<feature type="disulfide bond" evidence="1">
    <location>
        <begin position="135"/>
        <end position="170"/>
    </location>
</feature>
<feature type="disulfide bond" description="Interchain" evidence="1">
    <location>
        <position position="202"/>
    </location>
</feature>
<accession>O55183</accession>
<protein>
    <recommendedName>
        <fullName>Stanniocalcin-1</fullName>
        <shortName>STC-1</shortName>
    </recommendedName>
</protein>